<sequence>MSINFLSIPRNRFKAIGVLSVTCILIYVILHSSIITTDFDVSDYGDKFIPSIIFDDNNDNGENLKDPQPELDNDKGNGETDTTTSNSMTTAHTFWKGIFDTFDKYKMDLGQDPENAVSYVDKLKQKQGPLNKEVLLSKAIVSSELMKHLKEKHSGVVEDLPSVMPGSVYNKGSKGVVIIGGGKFSWLAYLALVQLRNVGSKLPVEIVMPSRADYEKELEFCENTLPEMQASCVVLPDVLGEAVMKNRKFASYQFKALALVVTSFEHILLLDSDNMIVSNPDEIFESKLYHQYGMITWPDYWKRTISPLFYDVAEIEVNENKRVRYNRFPLYNAPNVRSNIYTDQEREEVPFHDLQGSIAELSTESGQLIINKHTHGKTILLALYYNFYGPNLFYKLFSLGEQGEGDKDTFVAAAVVTRQDYYQVKSFIKTFGYADSDDKFQGVSMGQRNPLIDRKHYEDHVLALLEKDSFKSSSIADQIEQMKKFENEDFDQHNSIPLFTVHCNYPKLDPKLYMSRDDLYDEKEKKLKYRLYGNLKYTKEVVKDGETGTEASTDKVQIDFELQQWQHMQDILCLKKIYFTHFIDNDMNELCQFIENQVAWLSKSQN</sequence>
<proteinExistence type="inferred from homology"/>
<protein>
    <recommendedName>
        <fullName>Alpha-1,2-mannosyltransferase MNN23</fullName>
        <ecNumber>2.4.1.-</ecNumber>
    </recommendedName>
</protein>
<keyword id="KW-0333">Golgi apparatus</keyword>
<keyword id="KW-0472">Membrane</keyword>
<keyword id="KW-1185">Reference proteome</keyword>
<keyword id="KW-0735">Signal-anchor</keyword>
<keyword id="KW-0808">Transferase</keyword>
<keyword id="KW-0812">Transmembrane</keyword>
<keyword id="KW-1133">Transmembrane helix</keyword>
<accession>Q5AP90</accession>
<accession>A0A1D8PES4</accession>
<name>MNN23_CANAL</name>
<comment type="function">
    <text evidence="4">Alpha-1,2-mannosyltransferase required for cell wall integrity. Responsible for addition of the first alpha-1,2-linked mannose to form the branches on the mannan backbone of oligosaccharides. Addition of alpha-1,2-mannose is required for stabilization of the alpha-1,6-mannose backbone and hence regulates mannan fibril length; and is important for both immune recognition and virulence.</text>
</comment>
<comment type="pathway">
    <text>Protein modification; protein glycosylation.</text>
</comment>
<comment type="subcellular location">
    <subcellularLocation>
        <location evidence="1">Golgi apparatus membrane</location>
        <topology evidence="1">Single-pass type II membrane protein</topology>
    </subcellularLocation>
</comment>
<comment type="disruption phenotype">
    <text evidence="4">Leads to hypersensitivity to toxic ergosterol analog, amphotericin B, calcofluor white, and to thermosensitivity.</text>
</comment>
<comment type="similarity">
    <text evidence="5">Belongs to the MNN1/MNT family.</text>
</comment>
<reference key="1">
    <citation type="journal article" date="2004" name="Proc. Natl. Acad. Sci. U.S.A.">
        <title>The diploid genome sequence of Candida albicans.</title>
        <authorList>
            <person name="Jones T."/>
            <person name="Federspiel N.A."/>
            <person name="Chibana H."/>
            <person name="Dungan J."/>
            <person name="Kalman S."/>
            <person name="Magee B.B."/>
            <person name="Newport G."/>
            <person name="Thorstenson Y.R."/>
            <person name="Agabian N."/>
            <person name="Magee P.T."/>
            <person name="Davis R.W."/>
            <person name="Scherer S."/>
        </authorList>
    </citation>
    <scope>NUCLEOTIDE SEQUENCE [LARGE SCALE GENOMIC DNA]</scope>
    <source>
        <strain>SC5314 / ATCC MYA-2876</strain>
    </source>
</reference>
<reference key="2">
    <citation type="journal article" date="2007" name="Genome Biol.">
        <title>Assembly of the Candida albicans genome into sixteen supercontigs aligned on the eight chromosomes.</title>
        <authorList>
            <person name="van het Hoog M."/>
            <person name="Rast T.J."/>
            <person name="Martchenko M."/>
            <person name="Grindle S."/>
            <person name="Dignard D."/>
            <person name="Hogues H."/>
            <person name="Cuomo C."/>
            <person name="Berriman M."/>
            <person name="Scherer S."/>
            <person name="Magee B.B."/>
            <person name="Whiteway M."/>
            <person name="Chibana H."/>
            <person name="Nantel A."/>
            <person name="Magee P.T."/>
        </authorList>
    </citation>
    <scope>GENOME REANNOTATION</scope>
    <source>
        <strain>SC5314 / ATCC MYA-2876</strain>
    </source>
</reference>
<reference key="3">
    <citation type="journal article" date="2013" name="Genome Biol.">
        <title>Assembly of a phased diploid Candida albicans genome facilitates allele-specific measurements and provides a simple model for repeat and indel structure.</title>
        <authorList>
            <person name="Muzzey D."/>
            <person name="Schwartz K."/>
            <person name="Weissman J.S."/>
            <person name="Sherlock G."/>
        </authorList>
    </citation>
    <scope>NUCLEOTIDE SEQUENCE [LARGE SCALE GENOMIC DNA]</scope>
    <scope>GENOME REANNOTATION</scope>
    <source>
        <strain>SC5314 / ATCC MYA-2876</strain>
    </source>
</reference>
<reference key="4">
    <citation type="journal article" date="2013" name="PLoS Pathog.">
        <title>The Mnn2 mannosyltransferase family modulates mannoprotein fibril length, immune recognition and virulence of Candida albicans.</title>
        <authorList>
            <person name="Hall R.A."/>
            <person name="Bates S."/>
            <person name="Lenardon M.D."/>
            <person name="Maccallum D.M."/>
            <person name="Wagener J."/>
            <person name="Lowman D.W."/>
            <person name="Kruppa M.D."/>
            <person name="Williams D.L."/>
            <person name="Odds F.C."/>
            <person name="Brown A.J."/>
            <person name="Gow N.A."/>
        </authorList>
    </citation>
    <scope>FUNCTION</scope>
    <scope>DISRUPTION PHENOTYPE</scope>
</reference>
<gene>
    <name type="primary">MNN23</name>
    <name type="synonym">MNN3</name>
    <name type="ordered locus">CAALFM_C110070CA</name>
    <name type="ORF">CaO19.12338</name>
    <name type="ORF">CaO19.4874</name>
</gene>
<evidence type="ECO:0000250" key="1"/>
<evidence type="ECO:0000255" key="2"/>
<evidence type="ECO:0000256" key="3">
    <source>
        <dbReference type="SAM" id="MobiDB-lite"/>
    </source>
</evidence>
<evidence type="ECO:0000269" key="4">
    <source>
    </source>
</evidence>
<evidence type="ECO:0000305" key="5"/>
<organism>
    <name type="scientific">Candida albicans (strain SC5314 / ATCC MYA-2876)</name>
    <name type="common">Yeast</name>
    <dbReference type="NCBI Taxonomy" id="237561"/>
    <lineage>
        <taxon>Eukaryota</taxon>
        <taxon>Fungi</taxon>
        <taxon>Dikarya</taxon>
        <taxon>Ascomycota</taxon>
        <taxon>Saccharomycotina</taxon>
        <taxon>Pichiomycetes</taxon>
        <taxon>Debaryomycetaceae</taxon>
        <taxon>Candida/Lodderomyces clade</taxon>
        <taxon>Candida</taxon>
    </lineage>
</organism>
<feature type="chain" id="PRO_0000428637" description="Alpha-1,2-mannosyltransferase MNN23">
    <location>
        <begin position="1"/>
        <end position="606"/>
    </location>
</feature>
<feature type="topological domain" description="Cytoplasmic" evidence="2">
    <location>
        <begin position="1"/>
        <end position="14"/>
    </location>
</feature>
<feature type="transmembrane region" description="Helical" evidence="2">
    <location>
        <begin position="15"/>
        <end position="35"/>
    </location>
</feature>
<feature type="topological domain" description="Extracellular" evidence="2">
    <location>
        <begin position="36"/>
        <end position="606"/>
    </location>
</feature>
<feature type="region of interest" description="Disordered" evidence="3">
    <location>
        <begin position="59"/>
        <end position="86"/>
    </location>
</feature>
<feature type="compositionally biased region" description="Basic and acidic residues" evidence="3">
    <location>
        <begin position="62"/>
        <end position="78"/>
    </location>
</feature>
<dbReference type="EC" id="2.4.1.-"/>
<dbReference type="EMBL" id="CP017623">
    <property type="protein sequence ID" value="AOW26638.1"/>
    <property type="molecule type" value="Genomic_DNA"/>
</dbReference>
<dbReference type="RefSeq" id="XP_723558.2">
    <property type="nucleotide sequence ID" value="XM_718465.2"/>
</dbReference>
<dbReference type="STRING" id="237561.Q5AP90"/>
<dbReference type="EnsemblFungi" id="C1_10070C_A-T">
    <property type="protein sequence ID" value="C1_10070C_A-T-p1"/>
    <property type="gene ID" value="C1_10070C_A"/>
</dbReference>
<dbReference type="GeneID" id="3634813"/>
<dbReference type="KEGG" id="cal:CAALFM_C110070CA"/>
<dbReference type="CGD" id="CAL0000193748">
    <property type="gene designation" value="MNN23"/>
</dbReference>
<dbReference type="VEuPathDB" id="FungiDB:C1_10070C_A"/>
<dbReference type="eggNOG" id="ENOG502S8HP">
    <property type="taxonomic scope" value="Eukaryota"/>
</dbReference>
<dbReference type="HOGENOM" id="CLU_013298_1_2_1"/>
<dbReference type="InParanoid" id="Q5AP90"/>
<dbReference type="OrthoDB" id="430354at2759"/>
<dbReference type="UniPathway" id="UPA00378"/>
<dbReference type="PHI-base" id="PHI:2886"/>
<dbReference type="PRO" id="PR:Q5AP90"/>
<dbReference type="Proteomes" id="UP000000559">
    <property type="component" value="Chromosome 1"/>
</dbReference>
<dbReference type="GO" id="GO:0005794">
    <property type="term" value="C:Golgi apparatus"/>
    <property type="evidence" value="ECO:0000318"/>
    <property type="project" value="GO_Central"/>
</dbReference>
<dbReference type="GO" id="GO:0000139">
    <property type="term" value="C:Golgi membrane"/>
    <property type="evidence" value="ECO:0007669"/>
    <property type="project" value="UniProtKB-SubCell"/>
</dbReference>
<dbReference type="GO" id="GO:0000026">
    <property type="term" value="F:alpha-1,2-mannosyltransferase activity"/>
    <property type="evidence" value="ECO:0000318"/>
    <property type="project" value="GO_Central"/>
</dbReference>
<dbReference type="GO" id="GO:0046354">
    <property type="term" value="P:mannan biosynthetic process"/>
    <property type="evidence" value="ECO:0000315"/>
    <property type="project" value="CGD"/>
</dbReference>
<dbReference type="GO" id="GO:0035268">
    <property type="term" value="P:protein mannosylation"/>
    <property type="evidence" value="ECO:0000315"/>
    <property type="project" value="CGD"/>
</dbReference>
<dbReference type="InterPro" id="IPR022751">
    <property type="entry name" value="Alpha_mannosyltransferase"/>
</dbReference>
<dbReference type="InterPro" id="IPR029044">
    <property type="entry name" value="Nucleotide-diphossugar_trans"/>
</dbReference>
<dbReference type="PANTHER" id="PTHR31646">
    <property type="entry name" value="ALPHA-1,2-MANNOSYLTRANSFERASE MNN2"/>
    <property type="match status" value="1"/>
</dbReference>
<dbReference type="PANTHER" id="PTHR31646:SF1">
    <property type="entry name" value="ALPHA-1,2-MANNOSYLTRANSFERASE MNN2"/>
    <property type="match status" value="1"/>
</dbReference>
<dbReference type="Pfam" id="PF11051">
    <property type="entry name" value="Mannosyl_trans3"/>
    <property type="match status" value="1"/>
</dbReference>
<dbReference type="SUPFAM" id="SSF53448">
    <property type="entry name" value="Nucleotide-diphospho-sugar transferases"/>
    <property type="match status" value="1"/>
</dbReference>